<feature type="signal peptide" evidence="1">
    <location>
        <begin position="1"/>
        <end position="24"/>
    </location>
</feature>
<feature type="chain" id="PRO_0000018898" description="Class I histocompatibility antigen, Gogo-A*0201 alpha chain">
    <location>
        <begin position="25"/>
        <end position="365"/>
    </location>
</feature>
<feature type="topological domain" description="Extracellular" evidence="4">
    <location>
        <begin position="25"/>
        <end position="308"/>
    </location>
</feature>
<feature type="transmembrane region" description="Helical" evidence="4">
    <location>
        <begin position="309"/>
        <end position="332"/>
    </location>
</feature>
<feature type="topological domain" description="Cytoplasmic" evidence="4">
    <location>
        <begin position="333"/>
        <end position="365"/>
    </location>
</feature>
<feature type="domain" description="Ig-like C1-type">
    <location>
        <begin position="209"/>
        <end position="295"/>
    </location>
</feature>
<feature type="region of interest" description="Alpha-1">
    <location>
        <begin position="25"/>
        <end position="114"/>
    </location>
</feature>
<feature type="region of interest" description="Alpha-2">
    <location>
        <begin position="115"/>
        <end position="206"/>
    </location>
</feature>
<feature type="region of interest" description="Alpha-3">
    <location>
        <begin position="207"/>
        <end position="298"/>
    </location>
</feature>
<feature type="region of interest" description="Connecting peptide">
    <location>
        <begin position="299"/>
        <end position="308"/>
    </location>
</feature>
<feature type="region of interest" description="Disordered" evidence="6">
    <location>
        <begin position="338"/>
        <end position="365"/>
    </location>
</feature>
<feature type="compositionally biased region" description="Low complexity" evidence="6">
    <location>
        <begin position="342"/>
        <end position="359"/>
    </location>
</feature>
<feature type="modified residue" description="Phosphoserine" evidence="3">
    <location>
        <position position="343"/>
    </location>
</feature>
<feature type="modified residue" description="Phosphotyrosine" evidence="3">
    <location>
        <position position="344"/>
    </location>
</feature>
<feature type="modified residue" description="Phosphoserine" evidence="3">
    <location>
        <position position="345"/>
    </location>
</feature>
<feature type="modified residue" description="Phosphoserine" evidence="3">
    <location>
        <position position="349"/>
    </location>
</feature>
<feature type="modified residue" description="Phosphoserine" evidence="2">
    <location>
        <position position="350"/>
    </location>
</feature>
<feature type="modified residue" description="Phosphoserine" evidence="2">
    <location>
        <position position="352"/>
    </location>
</feature>
<feature type="modified residue" description="Phosphoserine" evidence="2">
    <location>
        <position position="356"/>
    </location>
</feature>
<feature type="modified residue" description="Phosphoserine" evidence="2">
    <location>
        <position position="359"/>
    </location>
</feature>
<feature type="glycosylation site" description="N-linked (GlcNAc...) asparagine" evidence="1">
    <location>
        <position position="110"/>
    </location>
</feature>
<feature type="disulfide bond" evidence="5">
    <location>
        <begin position="125"/>
        <end position="188"/>
    </location>
</feature>
<feature type="disulfide bond" evidence="5">
    <location>
        <begin position="227"/>
        <end position="283"/>
    </location>
</feature>
<name>1A02_GORGO</name>
<evidence type="ECO:0000250" key="1"/>
<evidence type="ECO:0000250" key="2">
    <source>
        <dbReference type="UniProtKB" id="P04439"/>
    </source>
</evidence>
<evidence type="ECO:0000250" key="3">
    <source>
        <dbReference type="UniProtKB" id="P18462"/>
    </source>
</evidence>
<evidence type="ECO:0000255" key="4"/>
<evidence type="ECO:0000255" key="5">
    <source>
        <dbReference type="PROSITE-ProRule" id="PRU00114"/>
    </source>
</evidence>
<evidence type="ECO:0000256" key="6">
    <source>
        <dbReference type="SAM" id="MobiDB-lite"/>
    </source>
</evidence>
<evidence type="ECO:0000305" key="7"/>
<reference key="1">
    <citation type="journal article" date="1991" name="J. Exp. Med.">
        <title>Gorilla class I major histocompatibility complex alleles: comparison to human and chimpanzee class I.</title>
        <authorList>
            <person name="Lawlor D.A."/>
            <person name="Warren E."/>
            <person name="Taylor P."/>
            <person name="Parham P."/>
        </authorList>
    </citation>
    <scope>NUCLEOTIDE SEQUENCE [MRNA]</scope>
</reference>
<proteinExistence type="evidence at transcript level"/>
<organism>
    <name type="scientific">Gorilla gorilla gorilla</name>
    <name type="common">Western lowland gorilla</name>
    <dbReference type="NCBI Taxonomy" id="9595"/>
    <lineage>
        <taxon>Eukaryota</taxon>
        <taxon>Metazoa</taxon>
        <taxon>Chordata</taxon>
        <taxon>Craniata</taxon>
        <taxon>Vertebrata</taxon>
        <taxon>Euteleostomi</taxon>
        <taxon>Mammalia</taxon>
        <taxon>Eutheria</taxon>
        <taxon>Euarchontoglires</taxon>
        <taxon>Primates</taxon>
        <taxon>Haplorrhini</taxon>
        <taxon>Catarrhini</taxon>
        <taxon>Hominidae</taxon>
        <taxon>Gorilla</taxon>
    </lineage>
</organism>
<protein>
    <recommendedName>
        <fullName>Class I histocompatibility antigen, Gogo-A*0201 alpha chain</fullName>
    </recommendedName>
</protein>
<accession>P30376</accession>
<sequence>MAVMAPRTLLLLLLGALALTQTWAGSHSMRYFSTSVSRPGRGEPRFIAVGYVDDTQFVRFDSDAASQRMEPRAPWIEQEEPEYWDGETRKVKAHSQTDRVNLGTLRGYYNQSEAGSHTIQKMYGCDVGSDGRFLRGYQQDAYDGKDYIALNEDLRSWTAADMAAEITKRKWEAAHFAEQLRAYLEGECVEWLRRYLENGKETLQRTDAPKTHMTHHAVSDHEAILRCWALSFYPAEITLTWQRDGEDQTQDTELVETRPAGDGTFQKWAAVVVPSGQEQRYTCHVQHESLPKPLTLRWEPSSQPTIPIVGIIAGLVLFGAVIAGAVIAAVRWRRKSSDRKGGSYSQAASSDSAQGSDVSLTACKV</sequence>
<keyword id="KW-1015">Disulfide bond</keyword>
<keyword id="KW-0325">Glycoprotein</keyword>
<keyword id="KW-0391">Immunity</keyword>
<keyword id="KW-0472">Membrane</keyword>
<keyword id="KW-0490">MHC I</keyword>
<keyword id="KW-0597">Phosphoprotein</keyword>
<keyword id="KW-1185">Reference proteome</keyword>
<keyword id="KW-0732">Signal</keyword>
<keyword id="KW-0812">Transmembrane</keyword>
<keyword id="KW-1133">Transmembrane helix</keyword>
<dbReference type="EMBL" id="X60259">
    <property type="protein sequence ID" value="CAA42811.1"/>
    <property type="molecule type" value="mRNA"/>
</dbReference>
<dbReference type="PIR" id="JH0535">
    <property type="entry name" value="JH0535"/>
</dbReference>
<dbReference type="SMR" id="P30376"/>
<dbReference type="FunCoup" id="P30376">
    <property type="interactions" value="815"/>
</dbReference>
<dbReference type="InParanoid" id="P30376"/>
<dbReference type="Proteomes" id="UP000001519">
    <property type="component" value="Unplaced"/>
</dbReference>
<dbReference type="GO" id="GO:0031901">
    <property type="term" value="C:early endosome membrane"/>
    <property type="evidence" value="ECO:0007669"/>
    <property type="project" value="UniProtKB-ARBA"/>
</dbReference>
<dbReference type="GO" id="GO:0012507">
    <property type="term" value="C:ER to Golgi transport vesicle membrane"/>
    <property type="evidence" value="ECO:0007669"/>
    <property type="project" value="UniProtKB-ARBA"/>
</dbReference>
<dbReference type="GO" id="GO:0009897">
    <property type="term" value="C:external side of plasma membrane"/>
    <property type="evidence" value="ECO:0000318"/>
    <property type="project" value="GO_Central"/>
</dbReference>
<dbReference type="GO" id="GO:0005615">
    <property type="term" value="C:extracellular space"/>
    <property type="evidence" value="ECO:0000318"/>
    <property type="project" value="GO_Central"/>
</dbReference>
<dbReference type="GO" id="GO:0098553">
    <property type="term" value="C:lumenal side of endoplasmic reticulum membrane"/>
    <property type="evidence" value="ECO:0007669"/>
    <property type="project" value="UniProtKB-ARBA"/>
</dbReference>
<dbReference type="GO" id="GO:0042612">
    <property type="term" value="C:MHC class I protein complex"/>
    <property type="evidence" value="ECO:0007669"/>
    <property type="project" value="UniProtKB-KW"/>
</dbReference>
<dbReference type="GO" id="GO:0030670">
    <property type="term" value="C:phagocytic vesicle membrane"/>
    <property type="evidence" value="ECO:0007669"/>
    <property type="project" value="UniProtKB-ARBA"/>
</dbReference>
<dbReference type="GO" id="GO:0055038">
    <property type="term" value="C:recycling endosome membrane"/>
    <property type="evidence" value="ECO:0007669"/>
    <property type="project" value="UniProtKB-ARBA"/>
</dbReference>
<dbReference type="GO" id="GO:0042605">
    <property type="term" value="F:peptide antigen binding"/>
    <property type="evidence" value="ECO:0000318"/>
    <property type="project" value="GO_Central"/>
</dbReference>
<dbReference type="GO" id="GO:0005102">
    <property type="term" value="F:signaling receptor binding"/>
    <property type="evidence" value="ECO:0000318"/>
    <property type="project" value="GO_Central"/>
</dbReference>
<dbReference type="GO" id="GO:0002486">
    <property type="term" value="P:antigen processing and presentation of endogenous peptide antigen via MHC class I via ER pathway, TAP-independent"/>
    <property type="evidence" value="ECO:0000318"/>
    <property type="project" value="GO_Central"/>
</dbReference>
<dbReference type="GO" id="GO:0002476">
    <property type="term" value="P:antigen processing and presentation of endogenous peptide antigen via MHC class Ib"/>
    <property type="evidence" value="ECO:0000318"/>
    <property type="project" value="GO_Central"/>
</dbReference>
<dbReference type="GO" id="GO:0006955">
    <property type="term" value="P:immune response"/>
    <property type="evidence" value="ECO:0000318"/>
    <property type="project" value="GO_Central"/>
</dbReference>
<dbReference type="GO" id="GO:0001916">
    <property type="term" value="P:positive regulation of T cell mediated cytotoxicity"/>
    <property type="evidence" value="ECO:0000318"/>
    <property type="project" value="GO_Central"/>
</dbReference>
<dbReference type="CDD" id="cd21027">
    <property type="entry name" value="IgC1_MHC_Ia_HLA-A"/>
    <property type="match status" value="1"/>
</dbReference>
<dbReference type="FunFam" id="2.60.40.10:FF:000014">
    <property type="entry name" value="H-2 class I histocompatibility antigen, alpha chain"/>
    <property type="match status" value="1"/>
</dbReference>
<dbReference type="FunFam" id="3.30.500.10:FF:000001">
    <property type="entry name" value="H-2 class I histocompatibility antigen, alpha chain"/>
    <property type="match status" value="1"/>
</dbReference>
<dbReference type="Gene3D" id="2.60.40.10">
    <property type="entry name" value="Immunoglobulins"/>
    <property type="match status" value="1"/>
</dbReference>
<dbReference type="Gene3D" id="3.30.500.10">
    <property type="entry name" value="MHC class I-like antigen recognition-like"/>
    <property type="match status" value="1"/>
</dbReference>
<dbReference type="InterPro" id="IPR007110">
    <property type="entry name" value="Ig-like_dom"/>
</dbReference>
<dbReference type="InterPro" id="IPR036179">
    <property type="entry name" value="Ig-like_dom_sf"/>
</dbReference>
<dbReference type="InterPro" id="IPR013783">
    <property type="entry name" value="Ig-like_fold"/>
</dbReference>
<dbReference type="InterPro" id="IPR003006">
    <property type="entry name" value="Ig/MHC_CS"/>
</dbReference>
<dbReference type="InterPro" id="IPR003597">
    <property type="entry name" value="Ig_C1-set"/>
</dbReference>
<dbReference type="InterPro" id="IPR050208">
    <property type="entry name" value="MHC_class-I_related"/>
</dbReference>
<dbReference type="InterPro" id="IPR011161">
    <property type="entry name" value="MHC_I-like_Ag-recog"/>
</dbReference>
<dbReference type="InterPro" id="IPR037055">
    <property type="entry name" value="MHC_I-like_Ag-recog_sf"/>
</dbReference>
<dbReference type="InterPro" id="IPR011162">
    <property type="entry name" value="MHC_I/II-like_Ag-recog"/>
</dbReference>
<dbReference type="InterPro" id="IPR001039">
    <property type="entry name" value="MHC_I_a_a1/a2"/>
</dbReference>
<dbReference type="InterPro" id="IPR010579">
    <property type="entry name" value="MHC_I_a_C"/>
</dbReference>
<dbReference type="PANTHER" id="PTHR16675:SF229">
    <property type="entry name" value="HLA CLASS I HISTOCOMPATIBILITY ANTIGEN, A ALPHA CHAIN"/>
    <property type="match status" value="1"/>
</dbReference>
<dbReference type="PANTHER" id="PTHR16675">
    <property type="entry name" value="MHC CLASS I-RELATED"/>
    <property type="match status" value="1"/>
</dbReference>
<dbReference type="Pfam" id="PF07654">
    <property type="entry name" value="C1-set"/>
    <property type="match status" value="1"/>
</dbReference>
<dbReference type="Pfam" id="PF00129">
    <property type="entry name" value="MHC_I"/>
    <property type="match status" value="1"/>
</dbReference>
<dbReference type="Pfam" id="PF06623">
    <property type="entry name" value="MHC_I_C"/>
    <property type="match status" value="1"/>
</dbReference>
<dbReference type="PRINTS" id="PR01638">
    <property type="entry name" value="MHCCLASSI"/>
</dbReference>
<dbReference type="SMART" id="SM00407">
    <property type="entry name" value="IGc1"/>
    <property type="match status" value="1"/>
</dbReference>
<dbReference type="SUPFAM" id="SSF48726">
    <property type="entry name" value="Immunoglobulin"/>
    <property type="match status" value="1"/>
</dbReference>
<dbReference type="SUPFAM" id="SSF54452">
    <property type="entry name" value="MHC antigen-recognition domain"/>
    <property type="match status" value="1"/>
</dbReference>
<dbReference type="PROSITE" id="PS50835">
    <property type="entry name" value="IG_LIKE"/>
    <property type="match status" value="1"/>
</dbReference>
<dbReference type="PROSITE" id="PS00290">
    <property type="entry name" value="IG_MHC"/>
    <property type="match status" value="1"/>
</dbReference>
<comment type="function">
    <text>Involved in the presentation of foreign antigens to the immune system.</text>
</comment>
<comment type="subunit">
    <text>Heterodimer of an alpha chain and a beta chain (beta-2-microglobulin).</text>
</comment>
<comment type="subcellular location">
    <subcellularLocation>
        <location>Membrane</location>
        <topology>Single-pass type I membrane protein</topology>
    </subcellularLocation>
</comment>
<comment type="similarity">
    <text evidence="7">Belongs to the MHC class I family.</text>
</comment>